<protein>
    <recommendedName>
        <fullName evidence="1">DNA mismatch repair protein MutS</fullName>
    </recommendedName>
</protein>
<keyword id="KW-0067">ATP-binding</keyword>
<keyword id="KW-0227">DNA damage</keyword>
<keyword id="KW-0234">DNA repair</keyword>
<keyword id="KW-0238">DNA-binding</keyword>
<keyword id="KW-0547">Nucleotide-binding</keyword>
<sequence length="853" mass="95304">MSAIENFDAHTPMMQQYLKLKAQHPEILLFYRMGDFYELFYDDAKRASQLLDISLTKRGASAGEPIPMAGIPYHAVENYLAKLVNQGESVAICEQIGDPATSKGPVERKVVRIVTPGTISDEALLQERQDNLLAAIWQDSKGFGYATLDISSGRFRLSEPADRETMAAELQRTNPAELLYAEDFAEMSLIEGRRGLRRRPLWEFEIDTARQQLNLQFGTRDLVGFGVENAPRGLCAAGCLLQYAKDTQRTTLPHIRSITMEREQDSIIMDAATRRNLEITQNLAGGAENTLASVLDCTVTPMGSRMLKRWLHMPVRDTRVLLERQQTIGALQDFTAELQPVLRQVGDLERILARLALRTARPRDLARMRHAFQQLPELRAQLENVDSAPVQALREKMGEFAELRDLLERAIIDTPPVLVRDGGVIASGYNEELDEWRALADGATDYLERLEVRERERTGLDTLKVGFNAVHGYYIQISRGQSHLAPINYMRRQTLKNAERYIIPELKEYEDKVLTSKGKALALEKQLYEELFDLLLPHLEALQQSASALAELDVLVNLAERAYTLNYTCPTFIDKPGIRITEGRHPVVEQVLNEPFIANPLNLSPQRRMLIITGPNMGGKSTYMRQTALIALMAYIGSYVPAQKVEIGPIDRIFTRVGAADDLASGRSTFMVEMTETANILHNATEYSLVLMDEIGRGTSTYDGLSLAWACAENLANKIKALTLFATHYFELTQLPEKMEGVANVHLDALEHGDTIAFMHSVQDGAASKSYGLAVAALAGVPKEVIKRARQKLRELESISPNAAATQVDGTQMSLLSVPEETSPAVEALENLDPDSLTPRQALEWIYRLKSLV</sequence>
<reference key="1">
    <citation type="journal article" date="2009" name="PLoS Genet.">
        <title>Organised genome dynamics in the Escherichia coli species results in highly diverse adaptive paths.</title>
        <authorList>
            <person name="Touchon M."/>
            <person name="Hoede C."/>
            <person name="Tenaillon O."/>
            <person name="Barbe V."/>
            <person name="Baeriswyl S."/>
            <person name="Bidet P."/>
            <person name="Bingen E."/>
            <person name="Bonacorsi S."/>
            <person name="Bouchier C."/>
            <person name="Bouvet O."/>
            <person name="Calteau A."/>
            <person name="Chiapello H."/>
            <person name="Clermont O."/>
            <person name="Cruveiller S."/>
            <person name="Danchin A."/>
            <person name="Diard M."/>
            <person name="Dossat C."/>
            <person name="Karoui M.E."/>
            <person name="Frapy E."/>
            <person name="Garry L."/>
            <person name="Ghigo J.M."/>
            <person name="Gilles A.M."/>
            <person name="Johnson J."/>
            <person name="Le Bouguenec C."/>
            <person name="Lescat M."/>
            <person name="Mangenot S."/>
            <person name="Martinez-Jehanne V."/>
            <person name="Matic I."/>
            <person name="Nassif X."/>
            <person name="Oztas S."/>
            <person name="Petit M.A."/>
            <person name="Pichon C."/>
            <person name="Rouy Z."/>
            <person name="Ruf C.S."/>
            <person name="Schneider D."/>
            <person name="Tourret J."/>
            <person name="Vacherie B."/>
            <person name="Vallenet D."/>
            <person name="Medigue C."/>
            <person name="Rocha E.P.C."/>
            <person name="Denamur E."/>
        </authorList>
    </citation>
    <scope>NUCLEOTIDE SEQUENCE [LARGE SCALE GENOMIC DNA]</scope>
    <source>
        <strain>UMN026 / ExPEC</strain>
    </source>
</reference>
<name>MUTS_ECOLU</name>
<feature type="chain" id="PRO_1000117286" description="DNA mismatch repair protein MutS">
    <location>
        <begin position="1"/>
        <end position="853"/>
    </location>
</feature>
<feature type="binding site" evidence="1">
    <location>
        <begin position="614"/>
        <end position="621"/>
    </location>
    <ligand>
        <name>ATP</name>
        <dbReference type="ChEBI" id="CHEBI:30616"/>
    </ligand>
</feature>
<proteinExistence type="inferred from homology"/>
<dbReference type="EMBL" id="CU928163">
    <property type="protein sequence ID" value="CAR14225.1"/>
    <property type="molecule type" value="Genomic_DNA"/>
</dbReference>
<dbReference type="RefSeq" id="WP_001272891.1">
    <property type="nucleotide sequence ID" value="NC_011751.1"/>
</dbReference>
<dbReference type="RefSeq" id="YP_002413747.1">
    <property type="nucleotide sequence ID" value="NC_011751.1"/>
</dbReference>
<dbReference type="SMR" id="B7N6W4"/>
<dbReference type="STRING" id="585056.ECUMN_3057"/>
<dbReference type="GeneID" id="75058595"/>
<dbReference type="KEGG" id="eum:ECUMN_3057"/>
<dbReference type="PATRIC" id="fig|585056.7.peg.3234"/>
<dbReference type="HOGENOM" id="CLU_002472_4_0_6"/>
<dbReference type="Proteomes" id="UP000007097">
    <property type="component" value="Chromosome"/>
</dbReference>
<dbReference type="GO" id="GO:0005829">
    <property type="term" value="C:cytosol"/>
    <property type="evidence" value="ECO:0007669"/>
    <property type="project" value="TreeGrafter"/>
</dbReference>
<dbReference type="GO" id="GO:0005524">
    <property type="term" value="F:ATP binding"/>
    <property type="evidence" value="ECO:0007669"/>
    <property type="project" value="UniProtKB-UniRule"/>
</dbReference>
<dbReference type="GO" id="GO:0140664">
    <property type="term" value="F:ATP-dependent DNA damage sensor activity"/>
    <property type="evidence" value="ECO:0007669"/>
    <property type="project" value="InterPro"/>
</dbReference>
<dbReference type="GO" id="GO:0003684">
    <property type="term" value="F:damaged DNA binding"/>
    <property type="evidence" value="ECO:0007669"/>
    <property type="project" value="UniProtKB-UniRule"/>
</dbReference>
<dbReference type="GO" id="GO:0030983">
    <property type="term" value="F:mismatched DNA binding"/>
    <property type="evidence" value="ECO:0007669"/>
    <property type="project" value="InterPro"/>
</dbReference>
<dbReference type="GO" id="GO:0006298">
    <property type="term" value="P:mismatch repair"/>
    <property type="evidence" value="ECO:0007669"/>
    <property type="project" value="UniProtKB-UniRule"/>
</dbReference>
<dbReference type="CDD" id="cd03284">
    <property type="entry name" value="ABC_MutS1"/>
    <property type="match status" value="1"/>
</dbReference>
<dbReference type="FunFam" id="1.10.1420.10:FF:000002">
    <property type="entry name" value="DNA mismatch repair protein MutS"/>
    <property type="match status" value="1"/>
</dbReference>
<dbReference type="FunFam" id="3.30.420.110:FF:000001">
    <property type="entry name" value="DNA mismatch repair protein MutS"/>
    <property type="match status" value="1"/>
</dbReference>
<dbReference type="FunFam" id="3.40.1170.10:FF:000001">
    <property type="entry name" value="DNA mismatch repair protein MutS"/>
    <property type="match status" value="1"/>
</dbReference>
<dbReference type="FunFam" id="3.40.50.300:FF:000283">
    <property type="entry name" value="DNA mismatch repair protein MutS"/>
    <property type="match status" value="1"/>
</dbReference>
<dbReference type="Gene3D" id="1.10.1420.10">
    <property type="match status" value="2"/>
</dbReference>
<dbReference type="Gene3D" id="6.10.140.430">
    <property type="match status" value="1"/>
</dbReference>
<dbReference type="Gene3D" id="3.40.1170.10">
    <property type="entry name" value="DNA repair protein MutS, domain I"/>
    <property type="match status" value="1"/>
</dbReference>
<dbReference type="Gene3D" id="3.30.420.110">
    <property type="entry name" value="MutS, connector domain"/>
    <property type="match status" value="1"/>
</dbReference>
<dbReference type="Gene3D" id="3.40.50.300">
    <property type="entry name" value="P-loop containing nucleotide triphosphate hydrolases"/>
    <property type="match status" value="1"/>
</dbReference>
<dbReference type="HAMAP" id="MF_00096">
    <property type="entry name" value="MutS"/>
    <property type="match status" value="1"/>
</dbReference>
<dbReference type="InterPro" id="IPR005748">
    <property type="entry name" value="DNA_mismatch_repair_MutS"/>
</dbReference>
<dbReference type="InterPro" id="IPR007695">
    <property type="entry name" value="DNA_mismatch_repair_MutS-lik_N"/>
</dbReference>
<dbReference type="InterPro" id="IPR017261">
    <property type="entry name" value="DNA_mismatch_repair_MutS/MSH"/>
</dbReference>
<dbReference type="InterPro" id="IPR000432">
    <property type="entry name" value="DNA_mismatch_repair_MutS_C"/>
</dbReference>
<dbReference type="InterPro" id="IPR007861">
    <property type="entry name" value="DNA_mismatch_repair_MutS_clamp"/>
</dbReference>
<dbReference type="InterPro" id="IPR007696">
    <property type="entry name" value="DNA_mismatch_repair_MutS_core"/>
</dbReference>
<dbReference type="InterPro" id="IPR016151">
    <property type="entry name" value="DNA_mismatch_repair_MutS_N"/>
</dbReference>
<dbReference type="InterPro" id="IPR036187">
    <property type="entry name" value="DNA_mismatch_repair_MutS_sf"/>
</dbReference>
<dbReference type="InterPro" id="IPR007860">
    <property type="entry name" value="DNA_mmatch_repair_MutS_con_dom"/>
</dbReference>
<dbReference type="InterPro" id="IPR045076">
    <property type="entry name" value="MutS"/>
</dbReference>
<dbReference type="InterPro" id="IPR036678">
    <property type="entry name" value="MutS_con_dom_sf"/>
</dbReference>
<dbReference type="InterPro" id="IPR027417">
    <property type="entry name" value="P-loop_NTPase"/>
</dbReference>
<dbReference type="NCBIfam" id="TIGR01070">
    <property type="entry name" value="mutS1"/>
    <property type="match status" value="1"/>
</dbReference>
<dbReference type="NCBIfam" id="NF003810">
    <property type="entry name" value="PRK05399.1"/>
    <property type="match status" value="1"/>
</dbReference>
<dbReference type="PANTHER" id="PTHR11361:SF34">
    <property type="entry name" value="DNA MISMATCH REPAIR PROTEIN MSH1, MITOCHONDRIAL"/>
    <property type="match status" value="1"/>
</dbReference>
<dbReference type="PANTHER" id="PTHR11361">
    <property type="entry name" value="DNA MISMATCH REPAIR PROTEIN MUTS FAMILY MEMBER"/>
    <property type="match status" value="1"/>
</dbReference>
<dbReference type="Pfam" id="PF01624">
    <property type="entry name" value="MutS_I"/>
    <property type="match status" value="1"/>
</dbReference>
<dbReference type="Pfam" id="PF05188">
    <property type="entry name" value="MutS_II"/>
    <property type="match status" value="1"/>
</dbReference>
<dbReference type="Pfam" id="PF05192">
    <property type="entry name" value="MutS_III"/>
    <property type="match status" value="1"/>
</dbReference>
<dbReference type="Pfam" id="PF05190">
    <property type="entry name" value="MutS_IV"/>
    <property type="match status" value="1"/>
</dbReference>
<dbReference type="Pfam" id="PF00488">
    <property type="entry name" value="MutS_V"/>
    <property type="match status" value="1"/>
</dbReference>
<dbReference type="PIRSF" id="PIRSF037677">
    <property type="entry name" value="DNA_mis_repair_Msh6"/>
    <property type="match status" value="1"/>
</dbReference>
<dbReference type="SMART" id="SM00534">
    <property type="entry name" value="MUTSac"/>
    <property type="match status" value="1"/>
</dbReference>
<dbReference type="SMART" id="SM00533">
    <property type="entry name" value="MUTSd"/>
    <property type="match status" value="1"/>
</dbReference>
<dbReference type="SUPFAM" id="SSF55271">
    <property type="entry name" value="DNA repair protein MutS, domain I"/>
    <property type="match status" value="1"/>
</dbReference>
<dbReference type="SUPFAM" id="SSF53150">
    <property type="entry name" value="DNA repair protein MutS, domain II"/>
    <property type="match status" value="1"/>
</dbReference>
<dbReference type="SUPFAM" id="SSF48334">
    <property type="entry name" value="DNA repair protein MutS, domain III"/>
    <property type="match status" value="1"/>
</dbReference>
<dbReference type="SUPFAM" id="SSF52540">
    <property type="entry name" value="P-loop containing nucleoside triphosphate hydrolases"/>
    <property type="match status" value="1"/>
</dbReference>
<dbReference type="PROSITE" id="PS00486">
    <property type="entry name" value="DNA_MISMATCH_REPAIR_2"/>
    <property type="match status" value="1"/>
</dbReference>
<comment type="function">
    <text evidence="1">This protein is involved in the repair of mismatches in DNA. It is possible that it carries out the mismatch recognition step. This protein has a weak ATPase activity.</text>
</comment>
<comment type="similarity">
    <text evidence="1">Belongs to the DNA mismatch repair MutS family.</text>
</comment>
<gene>
    <name evidence="1" type="primary">mutS</name>
    <name type="ordered locus">ECUMN_3057</name>
</gene>
<organism>
    <name type="scientific">Escherichia coli O17:K52:H18 (strain UMN026 / ExPEC)</name>
    <dbReference type="NCBI Taxonomy" id="585056"/>
    <lineage>
        <taxon>Bacteria</taxon>
        <taxon>Pseudomonadati</taxon>
        <taxon>Pseudomonadota</taxon>
        <taxon>Gammaproteobacteria</taxon>
        <taxon>Enterobacterales</taxon>
        <taxon>Enterobacteriaceae</taxon>
        <taxon>Escherichia</taxon>
    </lineage>
</organism>
<evidence type="ECO:0000255" key="1">
    <source>
        <dbReference type="HAMAP-Rule" id="MF_00096"/>
    </source>
</evidence>
<accession>B7N6W4</accession>